<sequence length="160" mass="17831">MNIIGIDPSLNSTGWAILSVNDNNYNEIRLVNNGSILTSNKKTIGERLNKIYSELLNILNSYKVDTASMEEIFINKNPKSSTLLCYARGILLLTLDVACIPLFEYSANRVKKSITGNGHAKKEQVCFMIENILNIKCYGTYDISDAIAVAICHIYSIKAF</sequence>
<dbReference type="EC" id="3.1.21.10" evidence="1"/>
<dbReference type="EMBL" id="CR925677">
    <property type="protein sequence ID" value="CAI27455.1"/>
    <property type="molecule type" value="Genomic_DNA"/>
</dbReference>
<dbReference type="RefSeq" id="WP_011255221.1">
    <property type="nucleotide sequence ID" value="NC_006831.1"/>
</dbReference>
<dbReference type="SMR" id="Q5FF10"/>
<dbReference type="KEGG" id="erg:ERGA_CDS_00030"/>
<dbReference type="HOGENOM" id="CLU_091257_3_1_5"/>
<dbReference type="OrthoDB" id="9805499at2"/>
<dbReference type="Proteomes" id="UP000000533">
    <property type="component" value="Chromosome"/>
</dbReference>
<dbReference type="GO" id="GO:0005737">
    <property type="term" value="C:cytoplasm"/>
    <property type="evidence" value="ECO:0007669"/>
    <property type="project" value="UniProtKB-SubCell"/>
</dbReference>
<dbReference type="GO" id="GO:0048476">
    <property type="term" value="C:Holliday junction resolvase complex"/>
    <property type="evidence" value="ECO:0007669"/>
    <property type="project" value="UniProtKB-UniRule"/>
</dbReference>
<dbReference type="GO" id="GO:0008821">
    <property type="term" value="F:crossover junction DNA endonuclease activity"/>
    <property type="evidence" value="ECO:0007669"/>
    <property type="project" value="UniProtKB-UniRule"/>
</dbReference>
<dbReference type="GO" id="GO:0003677">
    <property type="term" value="F:DNA binding"/>
    <property type="evidence" value="ECO:0007669"/>
    <property type="project" value="UniProtKB-KW"/>
</dbReference>
<dbReference type="GO" id="GO:0000287">
    <property type="term" value="F:magnesium ion binding"/>
    <property type="evidence" value="ECO:0007669"/>
    <property type="project" value="UniProtKB-UniRule"/>
</dbReference>
<dbReference type="GO" id="GO:0006310">
    <property type="term" value="P:DNA recombination"/>
    <property type="evidence" value="ECO:0007669"/>
    <property type="project" value="UniProtKB-UniRule"/>
</dbReference>
<dbReference type="GO" id="GO:0006281">
    <property type="term" value="P:DNA repair"/>
    <property type="evidence" value="ECO:0007669"/>
    <property type="project" value="UniProtKB-UniRule"/>
</dbReference>
<dbReference type="CDD" id="cd16962">
    <property type="entry name" value="RuvC"/>
    <property type="match status" value="1"/>
</dbReference>
<dbReference type="FunFam" id="3.30.420.10:FF:000002">
    <property type="entry name" value="Crossover junction endodeoxyribonuclease RuvC"/>
    <property type="match status" value="1"/>
</dbReference>
<dbReference type="Gene3D" id="3.30.420.10">
    <property type="entry name" value="Ribonuclease H-like superfamily/Ribonuclease H"/>
    <property type="match status" value="1"/>
</dbReference>
<dbReference type="HAMAP" id="MF_00034">
    <property type="entry name" value="RuvC"/>
    <property type="match status" value="1"/>
</dbReference>
<dbReference type="InterPro" id="IPR012337">
    <property type="entry name" value="RNaseH-like_sf"/>
</dbReference>
<dbReference type="InterPro" id="IPR036397">
    <property type="entry name" value="RNaseH_sf"/>
</dbReference>
<dbReference type="InterPro" id="IPR020563">
    <property type="entry name" value="X-over_junc_endoDNase_Mg_BS"/>
</dbReference>
<dbReference type="InterPro" id="IPR002176">
    <property type="entry name" value="X-over_junc_endoDNase_RuvC"/>
</dbReference>
<dbReference type="NCBIfam" id="TIGR00228">
    <property type="entry name" value="ruvC"/>
    <property type="match status" value="1"/>
</dbReference>
<dbReference type="PANTHER" id="PTHR30194">
    <property type="entry name" value="CROSSOVER JUNCTION ENDODEOXYRIBONUCLEASE RUVC"/>
    <property type="match status" value="1"/>
</dbReference>
<dbReference type="PANTHER" id="PTHR30194:SF3">
    <property type="entry name" value="CROSSOVER JUNCTION ENDODEOXYRIBONUCLEASE RUVC"/>
    <property type="match status" value="1"/>
</dbReference>
<dbReference type="Pfam" id="PF02075">
    <property type="entry name" value="RuvC"/>
    <property type="match status" value="1"/>
</dbReference>
<dbReference type="PRINTS" id="PR00696">
    <property type="entry name" value="RSOLVASERUVC"/>
</dbReference>
<dbReference type="SUPFAM" id="SSF53098">
    <property type="entry name" value="Ribonuclease H-like"/>
    <property type="match status" value="1"/>
</dbReference>
<dbReference type="PROSITE" id="PS01321">
    <property type="entry name" value="RUVC"/>
    <property type="match status" value="1"/>
</dbReference>
<organism>
    <name type="scientific">Ehrlichia ruminantium (strain Gardel)</name>
    <dbReference type="NCBI Taxonomy" id="302409"/>
    <lineage>
        <taxon>Bacteria</taxon>
        <taxon>Pseudomonadati</taxon>
        <taxon>Pseudomonadota</taxon>
        <taxon>Alphaproteobacteria</taxon>
        <taxon>Rickettsiales</taxon>
        <taxon>Anaplasmataceae</taxon>
        <taxon>Ehrlichia</taxon>
    </lineage>
</organism>
<name>RUVC_EHRRG</name>
<proteinExistence type="inferred from homology"/>
<evidence type="ECO:0000255" key="1">
    <source>
        <dbReference type="HAMAP-Rule" id="MF_00034"/>
    </source>
</evidence>
<feature type="chain" id="PRO_0000225142" description="Crossover junction endodeoxyribonuclease RuvC">
    <location>
        <begin position="1"/>
        <end position="160"/>
    </location>
</feature>
<feature type="active site" evidence="1">
    <location>
        <position position="7"/>
    </location>
</feature>
<feature type="active site" evidence="1">
    <location>
        <position position="70"/>
    </location>
</feature>
<feature type="active site" evidence="1">
    <location>
        <position position="142"/>
    </location>
</feature>
<feature type="binding site" evidence="1">
    <location>
        <position position="7"/>
    </location>
    <ligand>
        <name>Mg(2+)</name>
        <dbReference type="ChEBI" id="CHEBI:18420"/>
        <label>1</label>
    </ligand>
</feature>
<feature type="binding site" evidence="1">
    <location>
        <position position="70"/>
    </location>
    <ligand>
        <name>Mg(2+)</name>
        <dbReference type="ChEBI" id="CHEBI:18420"/>
        <label>2</label>
    </ligand>
</feature>
<feature type="binding site" evidence="1">
    <location>
        <position position="142"/>
    </location>
    <ligand>
        <name>Mg(2+)</name>
        <dbReference type="ChEBI" id="CHEBI:18420"/>
        <label>1</label>
    </ligand>
</feature>
<protein>
    <recommendedName>
        <fullName evidence="1">Crossover junction endodeoxyribonuclease RuvC</fullName>
        <ecNumber evidence="1">3.1.21.10</ecNumber>
    </recommendedName>
    <alternativeName>
        <fullName evidence="1">Holliday junction nuclease RuvC</fullName>
    </alternativeName>
    <alternativeName>
        <fullName evidence="1">Holliday junction resolvase RuvC</fullName>
    </alternativeName>
</protein>
<reference key="1">
    <citation type="journal article" date="2006" name="J. Bacteriol.">
        <title>Comparative genomic analysis of three strains of Ehrlichia ruminantium reveals an active process of genome size plasticity.</title>
        <authorList>
            <person name="Frutos R."/>
            <person name="Viari A."/>
            <person name="Ferraz C."/>
            <person name="Morgat A."/>
            <person name="Eychenie S."/>
            <person name="Kandassamy Y."/>
            <person name="Chantal I."/>
            <person name="Bensaid A."/>
            <person name="Coissac E."/>
            <person name="Vachiery N."/>
            <person name="Demaille J."/>
            <person name="Martinez D."/>
        </authorList>
    </citation>
    <scope>NUCLEOTIDE SEQUENCE [LARGE SCALE GENOMIC DNA]</scope>
    <source>
        <strain>Gardel</strain>
    </source>
</reference>
<accession>Q5FF10</accession>
<keyword id="KW-0963">Cytoplasm</keyword>
<keyword id="KW-0227">DNA damage</keyword>
<keyword id="KW-0233">DNA recombination</keyword>
<keyword id="KW-0234">DNA repair</keyword>
<keyword id="KW-0238">DNA-binding</keyword>
<keyword id="KW-0255">Endonuclease</keyword>
<keyword id="KW-0378">Hydrolase</keyword>
<keyword id="KW-0460">Magnesium</keyword>
<keyword id="KW-0479">Metal-binding</keyword>
<keyword id="KW-0540">Nuclease</keyword>
<comment type="function">
    <text evidence="1">The RuvA-RuvB-RuvC complex processes Holliday junction (HJ) DNA during genetic recombination and DNA repair. Endonuclease that resolves HJ intermediates. Cleaves cruciform DNA by making single-stranded nicks across the HJ at symmetrical positions within the homologous arms, yielding a 5'-phosphate and a 3'-hydroxyl group; requires a central core of homology in the junction. The consensus cleavage sequence is 5'-(A/T)TT(C/G)-3'. Cleavage occurs on the 3'-side of the TT dinucleotide at the point of strand exchange. HJ branch migration catalyzed by RuvA-RuvB allows RuvC to scan DNA until it finds its consensus sequence, where it cleaves and resolves the cruciform DNA.</text>
</comment>
<comment type="catalytic activity">
    <reaction evidence="1">
        <text>Endonucleolytic cleavage at a junction such as a reciprocal single-stranded crossover between two homologous DNA duplexes (Holliday junction).</text>
        <dbReference type="EC" id="3.1.21.10"/>
    </reaction>
</comment>
<comment type="cofactor">
    <cofactor evidence="1">
        <name>Mg(2+)</name>
        <dbReference type="ChEBI" id="CHEBI:18420"/>
    </cofactor>
    <text evidence="1">Binds 2 Mg(2+) ion per subunit.</text>
</comment>
<comment type="subunit">
    <text evidence="1">Homodimer which binds Holliday junction (HJ) DNA. The HJ becomes 2-fold symmetrical on binding to RuvC with unstacked arms; it has a different conformation from HJ DNA in complex with RuvA. In the full resolvosome a probable DNA-RuvA(4)-RuvB(12)-RuvC(2) complex forms which resolves the HJ.</text>
</comment>
<comment type="subcellular location">
    <subcellularLocation>
        <location evidence="1">Cytoplasm</location>
    </subcellularLocation>
</comment>
<comment type="similarity">
    <text evidence="1">Belongs to the RuvC family.</text>
</comment>
<gene>
    <name evidence="1" type="primary">ruvC</name>
    <name type="ordered locus">ERGA_CDS_00030</name>
</gene>